<feature type="chain" id="PRO_0000240924" description="Cysteine--tRNA ligase">
    <location>
        <begin position="1"/>
        <end position="473"/>
    </location>
</feature>
<feature type="short sequence motif" description="'HIGH' region">
    <location>
        <begin position="30"/>
        <end position="40"/>
    </location>
</feature>
<feature type="short sequence motif" description="'KMSKS' region">
    <location>
        <begin position="282"/>
        <end position="286"/>
    </location>
</feature>
<feature type="binding site" evidence="1">
    <location>
        <position position="28"/>
    </location>
    <ligand>
        <name>Zn(2+)</name>
        <dbReference type="ChEBI" id="CHEBI:29105"/>
    </ligand>
</feature>
<feature type="binding site" evidence="1">
    <location>
        <position position="209"/>
    </location>
    <ligand>
        <name>Zn(2+)</name>
        <dbReference type="ChEBI" id="CHEBI:29105"/>
    </ligand>
</feature>
<feature type="binding site" evidence="1">
    <location>
        <position position="234"/>
    </location>
    <ligand>
        <name>Zn(2+)</name>
        <dbReference type="ChEBI" id="CHEBI:29105"/>
    </ligand>
</feature>
<feature type="binding site" evidence="1">
    <location>
        <position position="238"/>
    </location>
    <ligand>
        <name>Zn(2+)</name>
        <dbReference type="ChEBI" id="CHEBI:29105"/>
    </ligand>
</feature>
<feature type="binding site" evidence="1">
    <location>
        <position position="285"/>
    </location>
    <ligand>
        <name>ATP</name>
        <dbReference type="ChEBI" id="CHEBI:30616"/>
    </ligand>
</feature>
<comment type="catalytic activity">
    <reaction evidence="1">
        <text>tRNA(Cys) + L-cysteine + ATP = L-cysteinyl-tRNA(Cys) + AMP + diphosphate</text>
        <dbReference type="Rhea" id="RHEA:17773"/>
        <dbReference type="Rhea" id="RHEA-COMP:9661"/>
        <dbReference type="Rhea" id="RHEA-COMP:9679"/>
        <dbReference type="ChEBI" id="CHEBI:30616"/>
        <dbReference type="ChEBI" id="CHEBI:33019"/>
        <dbReference type="ChEBI" id="CHEBI:35235"/>
        <dbReference type="ChEBI" id="CHEBI:78442"/>
        <dbReference type="ChEBI" id="CHEBI:78517"/>
        <dbReference type="ChEBI" id="CHEBI:456215"/>
        <dbReference type="EC" id="6.1.1.16"/>
    </reaction>
</comment>
<comment type="cofactor">
    <cofactor evidence="1">
        <name>Zn(2+)</name>
        <dbReference type="ChEBI" id="CHEBI:29105"/>
    </cofactor>
    <text evidence="1">Binds 1 zinc ion per subunit.</text>
</comment>
<comment type="subunit">
    <text evidence="1">Monomer.</text>
</comment>
<comment type="subcellular location">
    <subcellularLocation>
        <location evidence="1">Cytoplasm</location>
    </subcellularLocation>
</comment>
<comment type="similarity">
    <text evidence="1">Belongs to the class-I aminoacyl-tRNA synthetase family.</text>
</comment>
<organism>
    <name type="scientific">Neisseria gonorrhoeae (strain ATCC 700825 / FA 1090)</name>
    <dbReference type="NCBI Taxonomy" id="242231"/>
    <lineage>
        <taxon>Bacteria</taxon>
        <taxon>Pseudomonadati</taxon>
        <taxon>Pseudomonadota</taxon>
        <taxon>Betaproteobacteria</taxon>
        <taxon>Neisseriales</taxon>
        <taxon>Neisseriaceae</taxon>
        <taxon>Neisseria</taxon>
    </lineage>
</organism>
<evidence type="ECO:0000255" key="1">
    <source>
        <dbReference type="HAMAP-Rule" id="MF_00041"/>
    </source>
</evidence>
<accession>Q5F5D6</accession>
<name>SYC_NEIG1</name>
<dbReference type="EC" id="6.1.1.16" evidence="1"/>
<dbReference type="EMBL" id="AE004969">
    <property type="protein sequence ID" value="AAW90601.1"/>
    <property type="molecule type" value="Genomic_DNA"/>
</dbReference>
<dbReference type="RefSeq" id="WP_010355798.1">
    <property type="nucleotide sequence ID" value="NC_002946.2"/>
</dbReference>
<dbReference type="RefSeq" id="YP_209013.1">
    <property type="nucleotide sequence ID" value="NC_002946.2"/>
</dbReference>
<dbReference type="SMR" id="Q5F5D6"/>
<dbReference type="STRING" id="242231.NGO_1993"/>
<dbReference type="GeneID" id="66754121"/>
<dbReference type="KEGG" id="ngo:NGO_1993"/>
<dbReference type="PATRIC" id="fig|242231.10.peg.2404"/>
<dbReference type="HOGENOM" id="CLU_013528_0_1_4"/>
<dbReference type="Proteomes" id="UP000000535">
    <property type="component" value="Chromosome"/>
</dbReference>
<dbReference type="GO" id="GO:0005829">
    <property type="term" value="C:cytosol"/>
    <property type="evidence" value="ECO:0007669"/>
    <property type="project" value="TreeGrafter"/>
</dbReference>
<dbReference type="GO" id="GO:0005524">
    <property type="term" value="F:ATP binding"/>
    <property type="evidence" value="ECO:0007669"/>
    <property type="project" value="UniProtKB-UniRule"/>
</dbReference>
<dbReference type="GO" id="GO:0004817">
    <property type="term" value="F:cysteine-tRNA ligase activity"/>
    <property type="evidence" value="ECO:0007669"/>
    <property type="project" value="UniProtKB-UniRule"/>
</dbReference>
<dbReference type="GO" id="GO:0008270">
    <property type="term" value="F:zinc ion binding"/>
    <property type="evidence" value="ECO:0007669"/>
    <property type="project" value="UniProtKB-UniRule"/>
</dbReference>
<dbReference type="GO" id="GO:0006423">
    <property type="term" value="P:cysteinyl-tRNA aminoacylation"/>
    <property type="evidence" value="ECO:0007669"/>
    <property type="project" value="UniProtKB-UniRule"/>
</dbReference>
<dbReference type="CDD" id="cd07963">
    <property type="entry name" value="Anticodon_Ia_Cys"/>
    <property type="match status" value="1"/>
</dbReference>
<dbReference type="CDD" id="cd00672">
    <property type="entry name" value="CysRS_core"/>
    <property type="match status" value="1"/>
</dbReference>
<dbReference type="FunFam" id="3.40.50.620:FF:000009">
    <property type="entry name" value="Cysteine--tRNA ligase"/>
    <property type="match status" value="1"/>
</dbReference>
<dbReference type="Gene3D" id="1.20.120.1910">
    <property type="entry name" value="Cysteine-tRNA ligase, C-terminal anti-codon recognition domain"/>
    <property type="match status" value="1"/>
</dbReference>
<dbReference type="Gene3D" id="3.40.50.620">
    <property type="entry name" value="HUPs"/>
    <property type="match status" value="1"/>
</dbReference>
<dbReference type="HAMAP" id="MF_00041">
    <property type="entry name" value="Cys_tRNA_synth"/>
    <property type="match status" value="1"/>
</dbReference>
<dbReference type="InterPro" id="IPR015803">
    <property type="entry name" value="Cys-tRNA-ligase"/>
</dbReference>
<dbReference type="InterPro" id="IPR015273">
    <property type="entry name" value="Cys-tRNA-synt_Ia_DALR"/>
</dbReference>
<dbReference type="InterPro" id="IPR024909">
    <property type="entry name" value="Cys-tRNA/MSH_ligase"/>
</dbReference>
<dbReference type="InterPro" id="IPR056411">
    <property type="entry name" value="CysS_C"/>
</dbReference>
<dbReference type="InterPro" id="IPR014729">
    <property type="entry name" value="Rossmann-like_a/b/a_fold"/>
</dbReference>
<dbReference type="InterPro" id="IPR032678">
    <property type="entry name" value="tRNA-synt_1_cat_dom"/>
</dbReference>
<dbReference type="InterPro" id="IPR009080">
    <property type="entry name" value="tRNAsynth_Ia_anticodon-bd"/>
</dbReference>
<dbReference type="NCBIfam" id="TIGR00435">
    <property type="entry name" value="cysS"/>
    <property type="match status" value="1"/>
</dbReference>
<dbReference type="PANTHER" id="PTHR10890:SF3">
    <property type="entry name" value="CYSTEINE--TRNA LIGASE, CYTOPLASMIC"/>
    <property type="match status" value="1"/>
</dbReference>
<dbReference type="PANTHER" id="PTHR10890">
    <property type="entry name" value="CYSTEINYL-TRNA SYNTHETASE"/>
    <property type="match status" value="1"/>
</dbReference>
<dbReference type="Pfam" id="PF23493">
    <property type="entry name" value="CysS_C"/>
    <property type="match status" value="1"/>
</dbReference>
<dbReference type="Pfam" id="PF09190">
    <property type="entry name" value="DALR_2"/>
    <property type="match status" value="1"/>
</dbReference>
<dbReference type="Pfam" id="PF01406">
    <property type="entry name" value="tRNA-synt_1e"/>
    <property type="match status" value="1"/>
</dbReference>
<dbReference type="PRINTS" id="PR00983">
    <property type="entry name" value="TRNASYNTHCYS"/>
</dbReference>
<dbReference type="SMART" id="SM00840">
    <property type="entry name" value="DALR_2"/>
    <property type="match status" value="1"/>
</dbReference>
<dbReference type="SUPFAM" id="SSF47323">
    <property type="entry name" value="Anticodon-binding domain of a subclass of class I aminoacyl-tRNA synthetases"/>
    <property type="match status" value="1"/>
</dbReference>
<dbReference type="SUPFAM" id="SSF52374">
    <property type="entry name" value="Nucleotidylyl transferase"/>
    <property type="match status" value="1"/>
</dbReference>
<reference key="1">
    <citation type="submission" date="2003-03" db="EMBL/GenBank/DDBJ databases">
        <title>The complete genome sequence of Neisseria gonorrhoeae.</title>
        <authorList>
            <person name="Lewis L.A."/>
            <person name="Gillaspy A.F."/>
            <person name="McLaughlin R.E."/>
            <person name="Gipson M."/>
            <person name="Ducey T.F."/>
            <person name="Ownbey T."/>
            <person name="Hartman K."/>
            <person name="Nydick C."/>
            <person name="Carson M.B."/>
            <person name="Vaughn J."/>
            <person name="Thomson C."/>
            <person name="Song L."/>
            <person name="Lin S."/>
            <person name="Yuan X."/>
            <person name="Najar F."/>
            <person name="Zhan M."/>
            <person name="Ren Q."/>
            <person name="Zhu H."/>
            <person name="Qi S."/>
            <person name="Kenton S.M."/>
            <person name="Lai H."/>
            <person name="White J.D."/>
            <person name="Clifton S."/>
            <person name="Roe B.A."/>
            <person name="Dyer D.W."/>
        </authorList>
    </citation>
    <scope>NUCLEOTIDE SEQUENCE [LARGE SCALE GENOMIC DNA]</scope>
    <source>
        <strain>ATCC 700825 / FA 1090</strain>
    </source>
</reference>
<keyword id="KW-0030">Aminoacyl-tRNA synthetase</keyword>
<keyword id="KW-0067">ATP-binding</keyword>
<keyword id="KW-0963">Cytoplasm</keyword>
<keyword id="KW-0436">Ligase</keyword>
<keyword id="KW-0479">Metal-binding</keyword>
<keyword id="KW-0547">Nucleotide-binding</keyword>
<keyword id="KW-0648">Protein biosynthesis</keyword>
<keyword id="KW-1185">Reference proteome</keyword>
<keyword id="KW-0862">Zinc</keyword>
<gene>
    <name evidence="1" type="primary">cysS</name>
    <name type="ordered locus">NGO_1993</name>
</gene>
<protein>
    <recommendedName>
        <fullName evidence="1">Cysteine--tRNA ligase</fullName>
        <ecNumber evidence="1">6.1.1.16</ecNumber>
    </recommendedName>
    <alternativeName>
        <fullName evidence="1">Cysteinyl-tRNA synthetase</fullName>
        <shortName evidence="1">CysRS</shortName>
    </alternativeName>
</protein>
<sequence>MTAIYNTLTRQKEPFAPIDPENVRMYVCGMTVYDYCHLGHARVMVVFDMIARWLRECGYPLTYVRNITDIDDKIIARAAENGETIGELNARFIQAMHEDADALGVLRPDIEPKATENIPQMIAMIETLIQNGKAYPAANGDVYYAVREFAAYGQLSGKSLDDLRAGERVEVDGFKRDPLDFVLWKAAKAGEPAWESPWGNGRPGWHIECSAMSENLFGDTFDIHGGGADLQFPHHENEIAQSVGASGHTCGHDHAQTHHGQSIASHVKYWLHNGFIRVDGEKMSKSLGNFFTIREVLKQYDPEVVRFFILRAHYRSPLNYSDAHLDDAKGALTRLYTTLKNTPAAEFDLSENANGYTRRFYAAMNDDFGTVEAVAVLFELAGEVNKTNDAHLAGCLKALGGIIGLLQRNPIEFLQGGAVSDGLSNEEIEDLIARRKQARADKNWAESDRIRDLLNEHKIILEDSAGGTTWRRG</sequence>
<proteinExistence type="inferred from homology"/>